<reference evidence="8" key="1">
    <citation type="journal article" date="1998" name="Science">
        <title>Genome sequence of the nematode C. elegans: a platform for investigating biology.</title>
        <authorList>
            <consortium name="The C. elegans sequencing consortium"/>
        </authorList>
    </citation>
    <scope>NUCLEOTIDE SEQUENCE [LARGE SCALE GENOMIC DNA]</scope>
    <source>
        <strain evidence="8">Bristol N2</strain>
    </source>
</reference>
<reference evidence="7" key="2">
    <citation type="journal article" date="2006" name="Genetics">
        <title>Searching for neuronal left/right asymmetry: genomewide analysis of nematode receptor-type guanylyl cyclases.</title>
        <authorList>
            <person name="Ortiz C.O."/>
            <person name="Etchberger J.F."/>
            <person name="Posy S.L."/>
            <person name="Frokjaer-Jensen C."/>
            <person name="Lockery S."/>
            <person name="Honig B."/>
            <person name="Hobert O."/>
        </authorList>
    </citation>
    <scope>TISSUE SPECIFICITY</scope>
</reference>
<gene>
    <name evidence="9" type="primary">gcy-15</name>
    <name evidence="9" type="ORF">ZC239.7</name>
</gene>
<sequence>MEIAINRLNADKDLEVFHDLDVNYVDTSKTAGPRAARTAALNNATVAAMGLMRDCYIQSTILNINLKIAVSDVCEMDLSSVKGFDQTSVLMNSQTNSLAKSVMYFLDKYQWKKVALVSPSAVLTAFAARVRSDLLDALTANKIDILVDSRLDPMSDITEKVKEDAEKARIFIICDWSSNANLLRNYIFKLGEMNKMQSGEYFVLGYISYDTNYQWLEASSGDQRLVHLGASDINDYNLTENDLHEVYKNVVILSDGPPPAEPNSTWEDIKTQVLKKKPAKMCPPYCNTTISEKITPRWDRIKLLFDSIQYLADATNDALNIGANIYQSDIFYEHLISRKVDSVTGVTEYIDGYGAIVGSMQIYYHFSSSSHNSYSLFPCARLAQSSLLNTVWSLTDYSEGLSIDFVNKSAPKDTPVCGFYGENCGPPANNTFIIVISVGVAVLIGLAIAAAFLYKRYRYERRLHSLFFMIDRNQIILKKHTNLMSQQSLRSMASIHGSVVAASQTLRDSHFFIEDYNNASSINASSIFNTGSTARAGPFGPIPGFGGVTGASEDEKWHQIPDFGVGLYEGRTVALKRIYRSDVEFTRSNRLEIAKLQESVNSNVIEFVGMVVQSPDVFVVYELAQRGSLKDILDNDDMPLDDVFRSQMTKDIIAGLEYLHSSPVGCHGRLKSTNCLIDARWMVRLSSFGLRELRGEETWQQEDDVQEGKDQLWTSPELLRWSTGLSQCGVLLVQKSDVYSLAIVLYELFGRLGPWGDEPMEPREIVSLVKREALAGKKPFRPDMAVLKESPRIVQETVVAAWTEDPLNRPSLHQIKRKLKPLTIGLKRTIMDNMVSMIEKYTDKLEKDIAERNEELEAEKAKSEALLKMMLPEVVADSLKLGSNVSAESFENCTVFFSDCPGFVEMSATSKPIDIVQFLNDLYTVFDRIIDQFDVYKVETIADAYMVASGLPVPNGNHHAGEIASLGLALLKAVESFKIRHLPNEKVRLRIGMNSGPCVAGVVGLKMPRYCLFGDTVNTASRMESNGIPLRINCSGTAKEILDQLGGYEIEERGIVEMKGKGKQMTYFVRGENSDMRRERIIRERVKFASLKKAQIQEKTYEFS</sequence>
<keyword id="KW-0067">ATP-binding</keyword>
<keyword id="KW-1003">Cell membrane</keyword>
<keyword id="KW-0141">cGMP biosynthesis</keyword>
<keyword id="KW-0175">Coiled coil</keyword>
<keyword id="KW-0325">Glycoprotein</keyword>
<keyword id="KW-0456">Lyase</keyword>
<keyword id="KW-0472">Membrane</keyword>
<keyword id="KW-0547">Nucleotide-binding</keyword>
<keyword id="KW-0675">Receptor</keyword>
<keyword id="KW-1185">Reference proteome</keyword>
<keyword id="KW-0812">Transmembrane</keyword>
<keyword id="KW-1133">Transmembrane helix</keyword>
<proteinExistence type="evidence at transcript level"/>
<accession>P91550</accession>
<evidence type="ECO:0000250" key="1">
    <source>
        <dbReference type="UniProtKB" id="Q19187"/>
    </source>
</evidence>
<evidence type="ECO:0000255" key="2"/>
<evidence type="ECO:0000255" key="3">
    <source>
        <dbReference type="PROSITE-ProRule" id="PRU00099"/>
    </source>
</evidence>
<evidence type="ECO:0000255" key="4">
    <source>
        <dbReference type="PROSITE-ProRule" id="PRU00159"/>
    </source>
</evidence>
<evidence type="ECO:0000255" key="5">
    <source>
        <dbReference type="PROSITE-ProRule" id="PRU00498"/>
    </source>
</evidence>
<evidence type="ECO:0000269" key="6">
    <source>
    </source>
</evidence>
<evidence type="ECO:0000305" key="7"/>
<evidence type="ECO:0000312" key="8">
    <source>
        <dbReference type="Proteomes" id="UP000001940"/>
    </source>
</evidence>
<evidence type="ECO:0000312" key="9">
    <source>
        <dbReference type="WormBase" id="ZC239.7"/>
    </source>
</evidence>
<comment type="function">
    <text evidence="1">Guanylate cyclase involved in the production of the second messenger cGMP (By similarity).</text>
</comment>
<comment type="catalytic activity">
    <reaction evidence="1">
        <text>GTP = 3',5'-cyclic GMP + diphosphate</text>
        <dbReference type="Rhea" id="RHEA:13665"/>
        <dbReference type="ChEBI" id="CHEBI:33019"/>
        <dbReference type="ChEBI" id="CHEBI:37565"/>
        <dbReference type="ChEBI" id="CHEBI:57746"/>
        <dbReference type="EC" id="4.6.1.2"/>
    </reaction>
</comment>
<comment type="subcellular location">
    <subcellularLocation>
        <location evidence="7">Cell membrane</location>
        <topology evidence="7">Single-pass type I membrane protein</topology>
    </subcellularLocation>
</comment>
<comment type="tissue specificity">
    <text evidence="6">Expressed bilaterally in ASG sensory neurons.</text>
</comment>
<comment type="domain">
    <text evidence="4">The protein kinase domain is predicted to be catalytically inactive.</text>
</comment>
<comment type="similarity">
    <text evidence="3">Belongs to the adenylyl cyclase class-4/guanylyl cyclase family.</text>
</comment>
<protein>
    <recommendedName>
        <fullName evidence="7">Receptor-type guanylate cyclase gcy-15</fullName>
        <ecNumber evidence="1">4.6.1.2</ecNumber>
    </recommendedName>
</protein>
<dbReference type="EC" id="4.6.1.2" evidence="1"/>
<dbReference type="EMBL" id="BX284602">
    <property type="protein sequence ID" value="CCD64945.2"/>
    <property type="molecule type" value="Genomic_DNA"/>
</dbReference>
<dbReference type="RefSeq" id="NP_001364713.1">
    <property type="nucleotide sequence ID" value="NM_001377748.2"/>
</dbReference>
<dbReference type="RefSeq" id="NP_494468.2">
    <property type="nucleotide sequence ID" value="NM_062067.2"/>
</dbReference>
<dbReference type="SMR" id="P91550"/>
<dbReference type="FunCoup" id="P91550">
    <property type="interactions" value="105"/>
</dbReference>
<dbReference type="STRING" id="6239.ZC239.7.1"/>
<dbReference type="GlyCosmos" id="P91550">
    <property type="glycosylation" value="5 sites, No reported glycans"/>
</dbReference>
<dbReference type="PaxDb" id="6239-ZC239.7"/>
<dbReference type="EnsemblMetazoa" id="ZC239.7.1">
    <property type="protein sequence ID" value="ZC239.7.1"/>
    <property type="gene ID" value="WBGene00001541"/>
</dbReference>
<dbReference type="GeneID" id="191648"/>
<dbReference type="UCSC" id="ZC239.7">
    <property type="organism name" value="c. elegans"/>
</dbReference>
<dbReference type="AGR" id="WB:WBGene00001541"/>
<dbReference type="WormBase" id="ZC239.7">
    <property type="protein sequence ID" value="CE54042"/>
    <property type="gene ID" value="WBGene00001541"/>
    <property type="gene designation" value="gcy-15"/>
</dbReference>
<dbReference type="eggNOG" id="KOG1023">
    <property type="taxonomic scope" value="Eukaryota"/>
</dbReference>
<dbReference type="GeneTree" id="ENSGT00970000196266"/>
<dbReference type="HOGENOM" id="CLU_001072_1_2_1"/>
<dbReference type="InParanoid" id="P91550"/>
<dbReference type="OrthoDB" id="1890790at2759"/>
<dbReference type="PhylomeDB" id="P91550"/>
<dbReference type="Reactome" id="R-CEL-2514859">
    <property type="pathway name" value="Inactivation, recovery and regulation of the phototransduction cascade"/>
</dbReference>
<dbReference type="PRO" id="PR:P91550"/>
<dbReference type="Proteomes" id="UP000001940">
    <property type="component" value="Chromosome II"/>
</dbReference>
<dbReference type="Bgee" id="WBGene00001541">
    <property type="expression patterns" value="Expressed in larva and 1 other cell type or tissue"/>
</dbReference>
<dbReference type="GO" id="GO:0005886">
    <property type="term" value="C:plasma membrane"/>
    <property type="evidence" value="ECO:0000318"/>
    <property type="project" value="GO_Central"/>
</dbReference>
<dbReference type="GO" id="GO:0005524">
    <property type="term" value="F:ATP binding"/>
    <property type="evidence" value="ECO:0007669"/>
    <property type="project" value="UniProtKB-KW"/>
</dbReference>
<dbReference type="GO" id="GO:0004383">
    <property type="term" value="F:guanylate cyclase activity"/>
    <property type="evidence" value="ECO:0000318"/>
    <property type="project" value="GO_Central"/>
</dbReference>
<dbReference type="GO" id="GO:0001653">
    <property type="term" value="F:peptide receptor activity"/>
    <property type="evidence" value="ECO:0000318"/>
    <property type="project" value="GO_Central"/>
</dbReference>
<dbReference type="GO" id="GO:0004672">
    <property type="term" value="F:protein kinase activity"/>
    <property type="evidence" value="ECO:0007669"/>
    <property type="project" value="InterPro"/>
</dbReference>
<dbReference type="GO" id="GO:0006182">
    <property type="term" value="P:cGMP biosynthetic process"/>
    <property type="evidence" value="ECO:0000318"/>
    <property type="project" value="GO_Central"/>
</dbReference>
<dbReference type="GO" id="GO:0035556">
    <property type="term" value="P:intracellular signal transduction"/>
    <property type="evidence" value="ECO:0007669"/>
    <property type="project" value="InterPro"/>
</dbReference>
<dbReference type="GO" id="GO:0007168">
    <property type="term" value="P:receptor guanylyl cyclase signaling pathway"/>
    <property type="evidence" value="ECO:0000318"/>
    <property type="project" value="GO_Central"/>
</dbReference>
<dbReference type="CDD" id="cd07302">
    <property type="entry name" value="CHD"/>
    <property type="match status" value="1"/>
</dbReference>
<dbReference type="CDD" id="cd13992">
    <property type="entry name" value="PK_GC"/>
    <property type="match status" value="1"/>
</dbReference>
<dbReference type="FunFam" id="1.10.510.10:FF:001055">
    <property type="entry name" value="Guanylate cyclase"/>
    <property type="match status" value="1"/>
</dbReference>
<dbReference type="FunFam" id="3.30.70.1230:FF:000105">
    <property type="entry name" value="Receptor-type guanylate cyclase gcy-21"/>
    <property type="match status" value="1"/>
</dbReference>
<dbReference type="FunFam" id="3.40.50.2300:FF:000683">
    <property type="entry name" value="Receptor-type guanylate cyclase gcy-21"/>
    <property type="match status" value="1"/>
</dbReference>
<dbReference type="Gene3D" id="3.40.50.2300">
    <property type="match status" value="1"/>
</dbReference>
<dbReference type="Gene3D" id="3.30.70.1230">
    <property type="entry name" value="Nucleotide cyclase"/>
    <property type="match status" value="1"/>
</dbReference>
<dbReference type="Gene3D" id="1.10.510.10">
    <property type="entry name" value="Transferase(Phosphotransferase) domain 1"/>
    <property type="match status" value="1"/>
</dbReference>
<dbReference type="InterPro" id="IPR001054">
    <property type="entry name" value="A/G_cyclase"/>
</dbReference>
<dbReference type="InterPro" id="IPR018297">
    <property type="entry name" value="A/G_cyclase_CS"/>
</dbReference>
<dbReference type="InterPro" id="IPR001828">
    <property type="entry name" value="ANF_lig-bd_rcpt"/>
</dbReference>
<dbReference type="InterPro" id="IPR050401">
    <property type="entry name" value="Cyclic_nucleotide_synthase"/>
</dbReference>
<dbReference type="InterPro" id="IPR011009">
    <property type="entry name" value="Kinase-like_dom_sf"/>
</dbReference>
<dbReference type="InterPro" id="IPR029787">
    <property type="entry name" value="Nucleotide_cyclase"/>
</dbReference>
<dbReference type="InterPro" id="IPR028082">
    <property type="entry name" value="Peripla_BP_I"/>
</dbReference>
<dbReference type="InterPro" id="IPR000719">
    <property type="entry name" value="Prot_kinase_dom"/>
</dbReference>
<dbReference type="InterPro" id="IPR001245">
    <property type="entry name" value="Ser-Thr/Tyr_kinase_cat_dom"/>
</dbReference>
<dbReference type="PANTHER" id="PTHR11920">
    <property type="entry name" value="GUANYLYL CYCLASE"/>
    <property type="match status" value="1"/>
</dbReference>
<dbReference type="PANTHER" id="PTHR11920:SF436">
    <property type="entry name" value="RECEPTOR-TYPE GUANYLATE CYCLASE GCY-15-RELATED"/>
    <property type="match status" value="1"/>
</dbReference>
<dbReference type="Pfam" id="PF01094">
    <property type="entry name" value="ANF_receptor"/>
    <property type="match status" value="1"/>
</dbReference>
<dbReference type="Pfam" id="PF00211">
    <property type="entry name" value="Guanylate_cyc"/>
    <property type="match status" value="1"/>
</dbReference>
<dbReference type="Pfam" id="PF07714">
    <property type="entry name" value="PK_Tyr_Ser-Thr"/>
    <property type="match status" value="1"/>
</dbReference>
<dbReference type="SMART" id="SM00044">
    <property type="entry name" value="CYCc"/>
    <property type="match status" value="1"/>
</dbReference>
<dbReference type="SUPFAM" id="SSF55073">
    <property type="entry name" value="Nucleotide cyclase"/>
    <property type="match status" value="1"/>
</dbReference>
<dbReference type="SUPFAM" id="SSF53822">
    <property type="entry name" value="Periplasmic binding protein-like I"/>
    <property type="match status" value="1"/>
</dbReference>
<dbReference type="SUPFAM" id="SSF56112">
    <property type="entry name" value="Protein kinase-like (PK-like)"/>
    <property type="match status" value="1"/>
</dbReference>
<dbReference type="PROSITE" id="PS00452">
    <property type="entry name" value="GUANYLATE_CYCLASE_1"/>
    <property type="match status" value="1"/>
</dbReference>
<dbReference type="PROSITE" id="PS50125">
    <property type="entry name" value="GUANYLATE_CYCLASE_2"/>
    <property type="match status" value="1"/>
</dbReference>
<dbReference type="PROSITE" id="PS50011">
    <property type="entry name" value="PROTEIN_KINASE_DOM"/>
    <property type="match status" value="1"/>
</dbReference>
<organism evidence="8">
    <name type="scientific">Caenorhabditis elegans</name>
    <dbReference type="NCBI Taxonomy" id="6239"/>
    <lineage>
        <taxon>Eukaryota</taxon>
        <taxon>Metazoa</taxon>
        <taxon>Ecdysozoa</taxon>
        <taxon>Nematoda</taxon>
        <taxon>Chromadorea</taxon>
        <taxon>Rhabditida</taxon>
        <taxon>Rhabditina</taxon>
        <taxon>Rhabditomorpha</taxon>
        <taxon>Rhabditoidea</taxon>
        <taxon>Rhabditidae</taxon>
        <taxon>Peloderinae</taxon>
        <taxon>Caenorhabditis</taxon>
    </lineage>
</organism>
<name>GCY15_CAEEL</name>
<feature type="chain" id="PRO_0000433284" description="Receptor-type guanylate cyclase gcy-15" evidence="7">
    <location>
        <begin position="1"/>
        <end position="1104"/>
    </location>
</feature>
<feature type="topological domain" description="Extracellular" evidence="2">
    <location>
        <begin position="1"/>
        <end position="431"/>
    </location>
</feature>
<feature type="transmembrane region" description="Helical" evidence="2">
    <location>
        <begin position="432"/>
        <end position="452"/>
    </location>
</feature>
<feature type="topological domain" description="Cytoplasmic" evidence="2">
    <location>
        <begin position="453"/>
        <end position="1104"/>
    </location>
</feature>
<feature type="domain" description="Protein kinase" evidence="4">
    <location>
        <begin position="528"/>
        <end position="823"/>
    </location>
</feature>
<feature type="domain" description="Guanylate cyclase" evidence="3">
    <location>
        <begin position="894"/>
        <end position="1024"/>
    </location>
</feature>
<feature type="coiled-coil region" evidence="2">
    <location>
        <begin position="838"/>
        <end position="871"/>
    </location>
</feature>
<feature type="binding site" evidence="4">
    <location>
        <begin position="534"/>
        <end position="542"/>
    </location>
    <ligand>
        <name>ATP</name>
        <dbReference type="ChEBI" id="CHEBI:30616"/>
    </ligand>
</feature>
<feature type="binding site" evidence="4">
    <location>
        <position position="576"/>
    </location>
    <ligand>
        <name>ATP</name>
        <dbReference type="ChEBI" id="CHEBI:30616"/>
    </ligand>
</feature>
<feature type="glycosylation site" description="N-linked (GlcNAc...) asparagine" evidence="5">
    <location>
        <position position="43"/>
    </location>
</feature>
<feature type="glycosylation site" description="N-linked (GlcNAc...) asparagine" evidence="5">
    <location>
        <position position="237"/>
    </location>
</feature>
<feature type="glycosylation site" description="N-linked (GlcNAc...) asparagine" evidence="5">
    <location>
        <position position="263"/>
    </location>
</feature>
<feature type="glycosylation site" description="N-linked (GlcNAc...) asparagine" evidence="5">
    <location>
        <position position="287"/>
    </location>
</feature>
<feature type="glycosylation site" description="N-linked (GlcNAc...) asparagine" evidence="5">
    <location>
        <position position="407"/>
    </location>
</feature>
<feature type="glycosylation site" description="N-linked (GlcNAc...) asparagine" evidence="5">
    <location>
        <position position="429"/>
    </location>
</feature>